<evidence type="ECO:0000250" key="1">
    <source>
        <dbReference type="UniProtKB" id="P15385"/>
    </source>
</evidence>
<evidence type="ECO:0000250" key="2">
    <source>
        <dbReference type="UniProtKB" id="P63142"/>
    </source>
</evidence>
<evidence type="ECO:0000250" key="3">
    <source>
        <dbReference type="UniProtKB" id="Q28527"/>
    </source>
</evidence>
<evidence type="ECO:0000250" key="4">
    <source>
        <dbReference type="UniProtKB" id="Q61423"/>
    </source>
</evidence>
<evidence type="ECO:0000255" key="5"/>
<evidence type="ECO:0000256" key="6">
    <source>
        <dbReference type="SAM" id="MobiDB-lite"/>
    </source>
</evidence>
<evidence type="ECO:0000269" key="7">
    <source>
    </source>
</evidence>
<evidence type="ECO:0000269" key="8">
    <source>
    </source>
</evidence>
<evidence type="ECO:0000269" key="9">
    <source>
    </source>
</evidence>
<evidence type="ECO:0000269" key="10">
    <source>
    </source>
</evidence>
<evidence type="ECO:0000269" key="11">
    <source>
    </source>
</evidence>
<evidence type="ECO:0000269" key="12">
    <source>
    </source>
</evidence>
<evidence type="ECO:0000303" key="13">
    <source>
    </source>
</evidence>
<evidence type="ECO:0000303" key="14">
    <source>
    </source>
</evidence>
<evidence type="ECO:0000305" key="15"/>
<proteinExistence type="evidence at protein level"/>
<feature type="chain" id="PRO_0000053981" description="Potassium voltage-gated channel subfamily A member 4">
    <location>
        <begin position="1"/>
        <end position="653"/>
    </location>
</feature>
<feature type="topological domain" description="Cytoplasmic" evidence="2">
    <location>
        <begin position="1"/>
        <end position="304"/>
    </location>
</feature>
<feature type="transmembrane region" description="Helical; Name=Segment S1" evidence="2">
    <location>
        <begin position="305"/>
        <end position="326"/>
    </location>
</feature>
<feature type="topological domain" description="Extracellular" evidence="2">
    <location>
        <begin position="327"/>
        <end position="370"/>
    </location>
</feature>
<feature type="transmembrane region" description="Helical; Name=Segment S2" evidence="2">
    <location>
        <begin position="371"/>
        <end position="392"/>
    </location>
</feature>
<feature type="topological domain" description="Cytoplasmic" evidence="2">
    <location>
        <begin position="393"/>
        <end position="403"/>
    </location>
</feature>
<feature type="transmembrane region" description="Helical; Name=Segment S3" evidence="2">
    <location>
        <begin position="404"/>
        <end position="424"/>
    </location>
</feature>
<feature type="topological domain" description="Extracellular" evidence="2">
    <location>
        <begin position="425"/>
        <end position="439"/>
    </location>
</feature>
<feature type="transmembrane region" description="Helical; Voltage-sensor; Name=Segment S4" evidence="2">
    <location>
        <begin position="440"/>
        <end position="460"/>
    </location>
</feature>
<feature type="topological domain" description="Cytoplasmic" evidence="2">
    <location>
        <begin position="461"/>
        <end position="475"/>
    </location>
</feature>
<feature type="transmembrane region" description="Helical; Name=Segment S5" evidence="2">
    <location>
        <begin position="476"/>
        <end position="497"/>
    </location>
</feature>
<feature type="topological domain" description="Extracellular" evidence="2">
    <location>
        <begin position="498"/>
        <end position="511"/>
    </location>
</feature>
<feature type="intramembrane region" description="Helical; Name=Pore helix" evidence="2">
    <location>
        <begin position="512"/>
        <end position="523"/>
    </location>
</feature>
<feature type="intramembrane region" evidence="2">
    <location>
        <begin position="524"/>
        <end position="531"/>
    </location>
</feature>
<feature type="topological domain" description="Extracellular" evidence="2">
    <location>
        <begin position="532"/>
        <end position="538"/>
    </location>
</feature>
<feature type="transmembrane region" description="Helical; Name=Segment S6" evidence="2">
    <location>
        <begin position="539"/>
        <end position="567"/>
    </location>
</feature>
<feature type="topological domain" description="Cytoplasmic" evidence="2">
    <location>
        <begin position="568"/>
        <end position="653"/>
    </location>
</feature>
<feature type="region of interest" description="Disordered" evidence="6">
    <location>
        <begin position="24"/>
        <end position="148"/>
    </location>
</feature>
<feature type="region of interest" description="S4-S5 linker" evidence="2">
    <location>
        <begin position="462"/>
        <end position="475"/>
    </location>
</feature>
<feature type="region of interest" description="Disordered" evidence="6">
    <location>
        <begin position="629"/>
        <end position="653"/>
    </location>
</feature>
<feature type="short sequence motif" description="Selectivity filter" evidence="2">
    <location>
        <begin position="524"/>
        <end position="529"/>
    </location>
</feature>
<feature type="short sequence motif" description="PDZ-binding" evidence="1">
    <location>
        <begin position="651"/>
        <end position="653"/>
    </location>
</feature>
<feature type="compositionally biased region" description="Low complexity" evidence="6">
    <location>
        <begin position="36"/>
        <end position="52"/>
    </location>
</feature>
<feature type="compositionally biased region" description="Basic residues" evidence="6">
    <location>
        <begin position="81"/>
        <end position="97"/>
    </location>
</feature>
<feature type="compositionally biased region" description="Acidic residues" evidence="6">
    <location>
        <begin position="122"/>
        <end position="137"/>
    </location>
</feature>
<feature type="compositionally biased region" description="Basic and acidic residues" evidence="6">
    <location>
        <begin position="629"/>
        <end position="640"/>
    </location>
</feature>
<feature type="modified residue" description="Phosphoserine; by PKA" evidence="5">
    <location>
        <position position="90"/>
    </location>
</feature>
<feature type="modified residue" description="Phosphoserine" evidence="4">
    <location>
        <position position="122"/>
    </location>
</feature>
<feature type="modified residue" description="Phosphoserine; by PKA" evidence="5">
    <location>
        <position position="599"/>
    </location>
</feature>
<feature type="glycosylation site" description="N-linked (GlcNAc...) asparagine" evidence="5">
    <location>
        <position position="352"/>
    </location>
</feature>
<feature type="sequence variant" id="VAR_081837" description="In MCIDDS; uncertain significance; mildly decreased function in potassium transmembrane transport; dbSNP:rs779101828." evidence="11">
    <original>R</original>
    <variation>Q</variation>
    <location>
        <position position="89"/>
    </location>
</feature>
<feature type="sequence conflict" description="In Ref. 1; AAA60034." evidence="15" ref="1">
    <original>A</original>
    <variation>R</variation>
    <location>
        <position position="38"/>
    </location>
</feature>
<feature type="sequence conflict" description="In Ref. 1; AAA60034." evidence="15" ref="1">
    <original>A</original>
    <variation>R</variation>
    <location>
        <position position="42"/>
    </location>
</feature>
<feature type="sequence conflict" description="In Ref. 1; AAA60034." evidence="15" ref="1">
    <original>RRRRQ</original>
    <variation>EEEAT</variation>
    <location>
        <begin position="84"/>
        <end position="88"/>
    </location>
</feature>
<feature type="sequence conflict" description="In Ref. 1; AAA60034." evidence="15" ref="1">
    <original>S</original>
    <variation>D</variation>
    <location>
        <position position="304"/>
    </location>
</feature>
<feature type="sequence conflict" description="In Ref. 1; AAA60034." evidence="15" ref="1">
    <original>S</original>
    <variation>V</variation>
    <location>
        <position position="542"/>
    </location>
</feature>
<feature type="sequence conflict" description="In Ref. 1; AAA60034." evidence="15" ref="1">
    <original>G</original>
    <variation>A</variation>
    <location>
        <position position="631"/>
    </location>
</feature>
<dbReference type="EMBL" id="M55514">
    <property type="protein sequence ID" value="AAA60034.1"/>
    <property type="molecule type" value="mRNA"/>
</dbReference>
<dbReference type="EMBL" id="M60450">
    <property type="protein sequence ID" value="AAA61275.1"/>
    <property type="molecule type" value="mRNA"/>
</dbReference>
<dbReference type="EMBL" id="L02751">
    <property type="protein sequence ID" value="AAA36140.1"/>
    <property type="molecule type" value="mRNA"/>
</dbReference>
<dbReference type="EMBL" id="AC124657">
    <property type="status" value="NOT_ANNOTATED_CDS"/>
    <property type="molecule type" value="Genomic_DNA"/>
</dbReference>
<dbReference type="CCDS" id="CCDS41629.1"/>
<dbReference type="PIR" id="A39922">
    <property type="entry name" value="A39922"/>
</dbReference>
<dbReference type="RefSeq" id="NP_002224.1">
    <property type="nucleotide sequence ID" value="NM_002233.4"/>
</dbReference>
<dbReference type="BMRB" id="P22459"/>
<dbReference type="SMR" id="P22459"/>
<dbReference type="BioGRID" id="109942">
    <property type="interactions" value="72"/>
</dbReference>
<dbReference type="CORUM" id="P22459"/>
<dbReference type="FunCoup" id="P22459">
    <property type="interactions" value="343"/>
</dbReference>
<dbReference type="IntAct" id="P22459">
    <property type="interactions" value="49"/>
</dbReference>
<dbReference type="MINT" id="P22459"/>
<dbReference type="STRING" id="9606.ENSP00000328511"/>
<dbReference type="BindingDB" id="P22459"/>
<dbReference type="ChEMBL" id="CHEMBL4205"/>
<dbReference type="DrugBank" id="DB02299">
    <property type="generic name" value="Arginineamide"/>
</dbReference>
<dbReference type="DrugBank" id="DB06637">
    <property type="generic name" value="Dalfampridine"/>
</dbReference>
<dbReference type="DrugBank" id="DB00228">
    <property type="generic name" value="Enflurane"/>
</dbReference>
<dbReference type="DrugBank" id="DB01110">
    <property type="generic name" value="Miconazole"/>
</dbReference>
<dbReference type="DrugBank" id="DB01069">
    <property type="generic name" value="Promethazine"/>
</dbReference>
<dbReference type="DrugCentral" id="P22459"/>
<dbReference type="TCDB" id="1.A.1.2.31">
    <property type="family name" value="the voltage-gated ion channel (vic) superfamily"/>
</dbReference>
<dbReference type="GlyCosmos" id="P22459">
    <property type="glycosylation" value="1 site, No reported glycans"/>
</dbReference>
<dbReference type="GlyGen" id="P22459">
    <property type="glycosylation" value="1 site"/>
</dbReference>
<dbReference type="iPTMnet" id="P22459"/>
<dbReference type="PhosphoSitePlus" id="P22459"/>
<dbReference type="BioMuta" id="KCNA4"/>
<dbReference type="DMDM" id="313104127"/>
<dbReference type="jPOST" id="P22459"/>
<dbReference type="MassIVE" id="P22459"/>
<dbReference type="PaxDb" id="9606-ENSP00000328511"/>
<dbReference type="PeptideAtlas" id="P22459"/>
<dbReference type="ProteomicsDB" id="53992"/>
<dbReference type="ABCD" id="P22459">
    <property type="antibodies" value="1 sequenced antibody"/>
</dbReference>
<dbReference type="Antibodypedia" id="3115">
    <property type="antibodies" value="192 antibodies from 33 providers"/>
</dbReference>
<dbReference type="DNASU" id="3739"/>
<dbReference type="Ensembl" id="ENST00000328224.7">
    <property type="protein sequence ID" value="ENSP00000328511.6"/>
    <property type="gene ID" value="ENSG00000182255.7"/>
</dbReference>
<dbReference type="GeneID" id="3739"/>
<dbReference type="KEGG" id="hsa:3739"/>
<dbReference type="MANE-Select" id="ENST00000328224.7">
    <property type="protein sequence ID" value="ENSP00000328511.6"/>
    <property type="RefSeq nucleotide sequence ID" value="NM_002233.4"/>
    <property type="RefSeq protein sequence ID" value="NP_002224.1"/>
</dbReference>
<dbReference type="UCSC" id="uc001msk.4">
    <property type="organism name" value="human"/>
</dbReference>
<dbReference type="AGR" id="HGNC:6222"/>
<dbReference type="CTD" id="3739"/>
<dbReference type="DisGeNET" id="3739"/>
<dbReference type="GeneCards" id="KCNA4"/>
<dbReference type="HGNC" id="HGNC:6222">
    <property type="gene designation" value="KCNA4"/>
</dbReference>
<dbReference type="HPA" id="ENSG00000182255">
    <property type="expression patterns" value="Tissue enhanced (adrenal gland, brain)"/>
</dbReference>
<dbReference type="MalaCards" id="KCNA4"/>
<dbReference type="MIM" id="176266">
    <property type="type" value="gene"/>
</dbReference>
<dbReference type="MIM" id="618284">
    <property type="type" value="phenotype"/>
</dbReference>
<dbReference type="neXtProt" id="NX_P22459"/>
<dbReference type="OpenTargets" id="ENSG00000182255"/>
<dbReference type="PharmGKB" id="PA207"/>
<dbReference type="VEuPathDB" id="HostDB:ENSG00000182255"/>
<dbReference type="eggNOG" id="KOG1545">
    <property type="taxonomic scope" value="Eukaryota"/>
</dbReference>
<dbReference type="GeneTree" id="ENSGT00940000162248"/>
<dbReference type="HOGENOM" id="CLU_011722_4_0_1"/>
<dbReference type="InParanoid" id="P22459"/>
<dbReference type="OMA" id="DHGDECS"/>
<dbReference type="OrthoDB" id="415460at2759"/>
<dbReference type="PAN-GO" id="P22459">
    <property type="GO annotations" value="6 GO annotations based on evolutionary models"/>
</dbReference>
<dbReference type="PhylomeDB" id="P22459"/>
<dbReference type="TreeFam" id="TF313103"/>
<dbReference type="PathwayCommons" id="P22459"/>
<dbReference type="Reactome" id="R-HSA-1296072">
    <property type="pathway name" value="Voltage gated Potassium channels"/>
</dbReference>
<dbReference type="SignaLink" id="P22459"/>
<dbReference type="SIGNOR" id="P22459"/>
<dbReference type="BioGRID-ORCS" id="3739">
    <property type="hits" value="14 hits in 1158 CRISPR screens"/>
</dbReference>
<dbReference type="GeneWiki" id="KCNA4"/>
<dbReference type="GenomeRNAi" id="3739"/>
<dbReference type="Pharos" id="P22459">
    <property type="development level" value="Tclin"/>
</dbReference>
<dbReference type="PRO" id="PR:P22459"/>
<dbReference type="Proteomes" id="UP000005640">
    <property type="component" value="Chromosome 11"/>
</dbReference>
<dbReference type="RNAct" id="P22459">
    <property type="molecule type" value="protein"/>
</dbReference>
<dbReference type="Bgee" id="ENSG00000182255">
    <property type="expression patterns" value="Expressed in adrenal tissue and 105 other cell types or tissues"/>
</dbReference>
<dbReference type="GO" id="GO:0030424">
    <property type="term" value="C:axon"/>
    <property type="evidence" value="ECO:0000250"/>
    <property type="project" value="UniProtKB"/>
</dbReference>
<dbReference type="GO" id="GO:0043194">
    <property type="term" value="C:axon initial segment"/>
    <property type="evidence" value="ECO:0007669"/>
    <property type="project" value="Ensembl"/>
</dbReference>
<dbReference type="GO" id="GO:0043197">
    <property type="term" value="C:dendritic spine"/>
    <property type="evidence" value="ECO:0000318"/>
    <property type="project" value="GO_Central"/>
</dbReference>
<dbReference type="GO" id="GO:0016020">
    <property type="term" value="C:membrane"/>
    <property type="evidence" value="ECO:0000250"/>
    <property type="project" value="UniProtKB"/>
</dbReference>
<dbReference type="GO" id="GO:0005886">
    <property type="term" value="C:plasma membrane"/>
    <property type="evidence" value="ECO:0000315"/>
    <property type="project" value="UniProtKB"/>
</dbReference>
<dbReference type="GO" id="GO:0008076">
    <property type="term" value="C:voltage-gated potassium channel complex"/>
    <property type="evidence" value="ECO:0000315"/>
    <property type="project" value="UniProtKB"/>
</dbReference>
<dbReference type="GO" id="GO:0005251">
    <property type="term" value="F:delayed rectifier potassium channel activity"/>
    <property type="evidence" value="ECO:0000318"/>
    <property type="project" value="GO_Central"/>
</dbReference>
<dbReference type="GO" id="GO:0030955">
    <property type="term" value="F:potassium ion binding"/>
    <property type="evidence" value="ECO:0007669"/>
    <property type="project" value="InterPro"/>
</dbReference>
<dbReference type="GO" id="GO:0099508">
    <property type="term" value="F:voltage-gated monoatomic ion channel activity involved in regulation of presynaptic membrane potential"/>
    <property type="evidence" value="ECO:0007669"/>
    <property type="project" value="Ensembl"/>
</dbReference>
<dbReference type="GO" id="GO:0005249">
    <property type="term" value="F:voltage-gated potassium channel activity"/>
    <property type="evidence" value="ECO:0000314"/>
    <property type="project" value="UniProtKB"/>
</dbReference>
<dbReference type="GO" id="GO:0001508">
    <property type="term" value="P:action potential"/>
    <property type="evidence" value="ECO:0000318"/>
    <property type="project" value="GO_Central"/>
</dbReference>
<dbReference type="GO" id="GO:0071805">
    <property type="term" value="P:potassium ion transmembrane transport"/>
    <property type="evidence" value="ECO:0000314"/>
    <property type="project" value="UniProtKB"/>
</dbReference>
<dbReference type="GO" id="GO:0006813">
    <property type="term" value="P:potassium ion transport"/>
    <property type="evidence" value="ECO:0000304"/>
    <property type="project" value="ProtInc"/>
</dbReference>
<dbReference type="GO" id="GO:0051260">
    <property type="term" value="P:protein homooligomerization"/>
    <property type="evidence" value="ECO:0007669"/>
    <property type="project" value="InterPro"/>
</dbReference>
<dbReference type="FunFam" id="1.10.287.70:FF:000002">
    <property type="entry name" value="Potassium voltage-gated channel subfamily a member"/>
    <property type="match status" value="1"/>
</dbReference>
<dbReference type="FunFam" id="1.20.120.350:FF:000028">
    <property type="entry name" value="Potassium voltage-gated channel subfamily a member"/>
    <property type="match status" value="1"/>
</dbReference>
<dbReference type="FunFam" id="1.20.5.600:FF:000001">
    <property type="entry name" value="Potassium voltage-gated channel subfamily A member 4"/>
    <property type="match status" value="1"/>
</dbReference>
<dbReference type="FunFam" id="3.30.710.10:FF:000119">
    <property type="entry name" value="potassium voltage-gated channel subfamily A member 4"/>
    <property type="match status" value="1"/>
</dbReference>
<dbReference type="Gene3D" id="1.10.287.70">
    <property type="match status" value="1"/>
</dbReference>
<dbReference type="Gene3D" id="3.30.710.10">
    <property type="entry name" value="Potassium Channel Kv1.1, Chain A"/>
    <property type="match status" value="1"/>
</dbReference>
<dbReference type="Gene3D" id="1.20.5.600">
    <property type="entry name" value="Potassium channel, voltage dependent, Kv1.4, tandem inactivation domain"/>
    <property type="match status" value="1"/>
</dbReference>
<dbReference type="Gene3D" id="1.20.120.350">
    <property type="entry name" value="Voltage-gated potassium channels. Chain C"/>
    <property type="match status" value="1"/>
</dbReference>
<dbReference type="InterPro" id="IPR000210">
    <property type="entry name" value="BTB/POZ_dom"/>
</dbReference>
<dbReference type="InterPro" id="IPR005821">
    <property type="entry name" value="Ion_trans_dom"/>
</dbReference>
<dbReference type="InterPro" id="IPR003968">
    <property type="entry name" value="K_chnl_volt-dep_Kv"/>
</dbReference>
<dbReference type="InterPro" id="IPR003972">
    <property type="entry name" value="K_chnl_volt-dep_Kv1"/>
</dbReference>
<dbReference type="InterPro" id="IPR020467">
    <property type="entry name" value="K_chnl_volt-dep_Kv1.4"/>
</dbReference>
<dbReference type="InterPro" id="IPR012897">
    <property type="entry name" value="K_chnl_volt-dep_Kv1.4_TID"/>
</dbReference>
<dbReference type="InterPro" id="IPR037065">
    <property type="entry name" value="K_chnl_volt-dep_Kv1.4_TID_sf"/>
</dbReference>
<dbReference type="InterPro" id="IPR011333">
    <property type="entry name" value="SKP1/BTB/POZ_sf"/>
</dbReference>
<dbReference type="InterPro" id="IPR003131">
    <property type="entry name" value="T1-type_BTB"/>
</dbReference>
<dbReference type="InterPro" id="IPR028325">
    <property type="entry name" value="VG_K_chnl"/>
</dbReference>
<dbReference type="InterPro" id="IPR027359">
    <property type="entry name" value="Volt_channel_dom_sf"/>
</dbReference>
<dbReference type="PANTHER" id="PTHR11537:SF284">
    <property type="entry name" value="POTASSIUM VOLTAGE-GATED CHANNEL SUBFAMILY A MEMBER 4"/>
    <property type="match status" value="1"/>
</dbReference>
<dbReference type="PANTHER" id="PTHR11537">
    <property type="entry name" value="VOLTAGE-GATED POTASSIUM CHANNEL"/>
    <property type="match status" value="1"/>
</dbReference>
<dbReference type="Pfam" id="PF02214">
    <property type="entry name" value="BTB_2"/>
    <property type="match status" value="1"/>
</dbReference>
<dbReference type="Pfam" id="PF00520">
    <property type="entry name" value="Ion_trans"/>
    <property type="match status" value="1"/>
</dbReference>
<dbReference type="Pfam" id="PF07941">
    <property type="entry name" value="K_channel_TID"/>
    <property type="match status" value="1"/>
</dbReference>
<dbReference type="PRINTS" id="PR00169">
    <property type="entry name" value="KCHANNEL"/>
</dbReference>
<dbReference type="PRINTS" id="PR01511">
    <property type="entry name" value="KV14CHANNEL"/>
</dbReference>
<dbReference type="PRINTS" id="PR01491">
    <property type="entry name" value="KVCHANNEL"/>
</dbReference>
<dbReference type="PRINTS" id="PR01496">
    <property type="entry name" value="SHAKERCHANEL"/>
</dbReference>
<dbReference type="SMART" id="SM00225">
    <property type="entry name" value="BTB"/>
    <property type="match status" value="1"/>
</dbReference>
<dbReference type="SUPFAM" id="SSF54695">
    <property type="entry name" value="POZ domain"/>
    <property type="match status" value="1"/>
</dbReference>
<dbReference type="SUPFAM" id="SSF81324">
    <property type="entry name" value="Voltage-gated potassium channels"/>
    <property type="match status" value="1"/>
</dbReference>
<keyword id="KW-0898">Cataract</keyword>
<keyword id="KW-1003">Cell membrane</keyword>
<keyword id="KW-0966">Cell projection</keyword>
<keyword id="KW-0225">Disease variant</keyword>
<keyword id="KW-1023">Dystonia</keyword>
<keyword id="KW-0325">Glycoprotein</keyword>
<keyword id="KW-0991">Intellectual disability</keyword>
<keyword id="KW-0407">Ion channel</keyword>
<keyword id="KW-0406">Ion transport</keyword>
<keyword id="KW-0472">Membrane</keyword>
<keyword id="KW-0597">Phosphoprotein</keyword>
<keyword id="KW-0630">Potassium</keyword>
<keyword id="KW-0631">Potassium channel</keyword>
<keyword id="KW-0633">Potassium transport</keyword>
<keyword id="KW-1267">Proteomics identification</keyword>
<keyword id="KW-1185">Reference proteome</keyword>
<keyword id="KW-0812">Transmembrane</keyword>
<keyword id="KW-1133">Transmembrane helix</keyword>
<keyword id="KW-0813">Transport</keyword>
<keyword id="KW-0851">Voltage-gated channel</keyword>
<comment type="function">
    <text evidence="7 8 11 12">Voltage-gated potassium channel that mediates transmembrane potassium transport in excitable membranes. Forms tetrameric potassium-selective channels through which potassium ions pass in accordance with their electrochemical gradient. The channel alternates between opened and closed conformations in response to the voltage difference across the membrane (PubMed:19912772, PubMed:8495559). Can form functional homotetrameric channels and heterotetrameric channels that contain variable proportions of KCNA1, KCNA2, KCNA4, KCNA5, and possibly other family members as well; channel properties depend on the type of alpha subunits that are part of the channel (PubMed:8495559). Channel properties are modulated by cytoplasmic beta subunits that regulate the subcellular location of the alpha subunits and promote rapid inactivation. In vivo, membranes probably contain a mixture of heteromeric potassium channel complexes, making it difficult to assign currents observed in intact tissues to any particular potassium channel family member. Homotetrameric KCNA4 forms a potassium channel that opens in response to membrane depolarization, followed by rapid spontaneous channel closure (PubMed:19912772, PubMed:8495559). Likewise, a heterotetrameric channel formed by KCNA1 and KCNA4 shows rapid inactivation (PubMed:17156368).</text>
</comment>
<comment type="catalytic activity">
    <reaction evidence="7 8 11 12">
        <text>K(+)(in) = K(+)(out)</text>
        <dbReference type="Rhea" id="RHEA:29463"/>
        <dbReference type="ChEBI" id="CHEBI:29103"/>
    </reaction>
</comment>
<comment type="activity regulation">
    <text evidence="8">Inhibited by 4-aminopyridine (4-AP), but not by tetraethylammonium (TEA) and charybdotoxin (CTX).</text>
</comment>
<comment type="subunit">
    <text evidence="1 9">Homotetramer and heterotetramer of potassium channel proteins (By similarity). Interacts with KCNAB1 and KCNAB2 (By similarity). Interacts with DLG1, DLG2 and DLG4 via their PDZ domains (By similarity). Interacts with SIGMAR1 (By similarity). Detected in a complex with KCNA1 (By similarity). Interacts with KCNA2 (By similarity). Part of a complex containing KCNA1, KCNAB1 and LGI1 (By similarity). Interacts (via cytoplasmic N-terminal domain) with KCNRG (PubMed:19968958).</text>
</comment>
<comment type="interaction">
    <interactant intactId="EBI-631235">
        <id>P22459</id>
    </interactant>
    <interactant intactId="EBI-357481">
        <id>Q12959</id>
        <label>DLG1</label>
    </interactant>
    <organismsDiffer>false</organismsDiffer>
    <experiments>2</experiments>
</comment>
<comment type="interaction">
    <interactant intactId="EBI-631235">
        <id>P22459</id>
    </interactant>
    <interactant intactId="EBI-80389">
        <id>P78352</id>
        <label>DLG4</label>
    </interactant>
    <organismsDiffer>false</organismsDiffer>
    <experiments>2</experiments>
</comment>
<comment type="interaction">
    <interactant intactId="EBI-631235">
        <id>P22459</id>
    </interactant>
    <interactant intactId="EBI-711613">
        <id>P21673</id>
        <label>SAT1</label>
    </interactant>
    <organismsDiffer>false</organismsDiffer>
    <experiments>4</experiments>
</comment>
<comment type="interaction">
    <interactant intactId="EBI-631235">
        <id>P22459</id>
    </interactant>
    <interactant intactId="EBI-349596">
        <id>Q62936</id>
        <label>Dlg3</label>
    </interactant>
    <organismsDiffer>true</organismsDiffer>
    <experiments>4</experiments>
</comment>
<comment type="interaction">
    <interactant intactId="EBI-631235">
        <id>P22459</id>
    </interactant>
    <interactant intactId="EBI-375655">
        <id>P31016</id>
        <label>Dlg4</label>
    </interactant>
    <organismsDiffer>true</organismsDiffer>
    <experiments>3</experiments>
</comment>
<comment type="subcellular location">
    <subcellularLocation>
        <location evidence="7 8 9 12">Cell membrane</location>
        <topology evidence="5">Multi-pass membrane protein</topology>
    </subcellularLocation>
    <subcellularLocation>
        <location evidence="1">Cell projection</location>
        <location evidence="1">Axon</location>
    </subcellularLocation>
</comment>
<comment type="tissue specificity">
    <text evidence="10 11">Expressed in brain, and at lower levels in the testis, lung, kidney, colon and heart (PubMed:27582084). Detected in heart ventricle.</text>
</comment>
<comment type="domain">
    <text evidence="3">The N-terminus may be important in determining the rate of inactivation of the channel while the tail may play a role in modulation of channel activity and/or targeting of the channel to specific subcellular compartments.</text>
</comment>
<comment type="domain">
    <text evidence="2">The transmembrane segment S4 functions as a voltage-sensor and is characterized by a series of positively charged amino acids at every third position. Channel opening and closing is effected by a conformation change that affects the position and orientation of the voltage-sensor paddle formed by S3 and S4 within the membrane. A transmembrane electric field that is positive inside would push the positively charged S4 segment outwards, thereby opening the pore, while a field that is negative inside would pull the S4 segment inwards and close the pore. Changes in the position and orientation of S4 are then transmitted to the activation gate formed by the inner helix bundle via the S4-S5 linker region.</text>
</comment>
<comment type="disease" evidence="11">
    <disease id="DI-05464">
        <name>Microcephaly, cataracts, impaired intellectual development, and dystonia with abnormal striatum</name>
        <acronym>MCIDDS</acronym>
        <description>An autosomal recessive syndrome characterized by cognitive impairment, attention deficit-hyperactivity disorder, microcephaly, growth retardation, congenital cataract, and dystonia. Brain MRI shows unusual thinning of the lentiform nucleus, predominantly involving the putamen, and swelling in the caudate heads.</description>
        <dbReference type="MIM" id="618284"/>
    </disease>
    <text>The disease may be caused by variants affecting the gene represented in this entry.</text>
</comment>
<comment type="similarity">
    <text evidence="15">Belongs to the potassium channel family. A (Shaker) (TC 1.A.1.2) subfamily. Kv1.4/KCNA4 sub-subfamily.</text>
</comment>
<accession>P22459</accession>
<protein>
    <recommendedName>
        <fullName>Potassium voltage-gated channel subfamily A member 4</fullName>
    </recommendedName>
    <alternativeName>
        <fullName>HPCN2</fullName>
    </alternativeName>
    <alternativeName>
        <fullName evidence="13">Voltage-gated K(+) channel HuKII</fullName>
    </alternativeName>
    <alternativeName>
        <fullName>Voltage-gated potassium channel HBK4</fullName>
    </alternativeName>
    <alternativeName>
        <fullName evidence="14">Voltage-gated potassium channel HK1</fullName>
    </alternativeName>
    <alternativeName>
        <fullName>Voltage-gated potassium channel subunit Kv1.4</fullName>
    </alternativeName>
</protein>
<organism>
    <name type="scientific">Homo sapiens</name>
    <name type="common">Human</name>
    <dbReference type="NCBI Taxonomy" id="9606"/>
    <lineage>
        <taxon>Eukaryota</taxon>
        <taxon>Metazoa</taxon>
        <taxon>Chordata</taxon>
        <taxon>Craniata</taxon>
        <taxon>Vertebrata</taxon>
        <taxon>Euteleostomi</taxon>
        <taxon>Mammalia</taxon>
        <taxon>Eutheria</taxon>
        <taxon>Euarchontoglires</taxon>
        <taxon>Primates</taxon>
        <taxon>Haplorrhini</taxon>
        <taxon>Catarrhini</taxon>
        <taxon>Hominidae</taxon>
        <taxon>Homo</taxon>
    </lineage>
</organism>
<gene>
    <name type="primary">KCNA4</name>
    <name type="synonym">KCNA4L</name>
</gene>
<name>KCNA4_HUMAN</name>
<reference key="1">
    <citation type="journal article" date="1990" name="Nucleic Acids Res.">
        <title>Sequence of a human fetal skeletal muscle potassium channel cDNA related to RCK4.</title>
        <authorList>
            <person name="Philipson L.H."/>
            <person name="Schaefer K."/>
            <person name="Lamendola J."/>
            <person name="Bell G.I."/>
            <person name="Steiner D.F."/>
        </authorList>
    </citation>
    <scope>NUCLEOTIDE SEQUENCE [MRNA]</scope>
    <source>
        <tissue>Skeletal muscle</tissue>
    </source>
</reference>
<reference key="2">
    <citation type="journal article" date="1991" name="FASEB J.">
        <title>Molecular cloning and characterization of two voltage-gated K+ channel cDNAs from human ventricle.</title>
        <authorList>
            <person name="Tamkun M.M."/>
            <person name="Knoth K.M."/>
            <person name="Walbridge J.A."/>
            <person name="Kroemer H."/>
            <person name="Roden D.M."/>
            <person name="Glover D.M."/>
        </authorList>
    </citation>
    <scope>NUCLEOTIDE SEQUENCE [MRNA]</scope>
    <scope>TISSUE SPECIFICITY</scope>
    <source>
        <tissue>Heart</tissue>
    </source>
</reference>
<reference key="3">
    <citation type="journal article" date="1990" name="Mol. Cell. Neurosci.">
        <title>Human potassium channel genes: molecular cloning and functional expression.</title>
        <authorList>
            <person name="Ramaswami M."/>
            <person name="Gautam M."/>
            <person name="Kamb A."/>
            <person name="Rudy B."/>
            <person name="Tanouye M.A."/>
            <person name="Mathew M.K."/>
        </authorList>
    </citation>
    <scope>NUCLEOTIDE SEQUENCE [MRNA]</scope>
    <scope>FUNCTION</scope>
    <scope>SUBCELLULAR LOCATION</scope>
    <scope>ACTIVITY REGULATION</scope>
    <scope>TRANSPORTER ACTIVITY</scope>
    <source>
        <tissue>Brain</tissue>
    </source>
</reference>
<reference key="4">
    <citation type="journal article" date="2006" name="Nature">
        <title>Human chromosome 11 DNA sequence and analysis including novel gene identification.</title>
        <authorList>
            <person name="Taylor T.D."/>
            <person name="Noguchi H."/>
            <person name="Totoki Y."/>
            <person name="Toyoda A."/>
            <person name="Kuroki Y."/>
            <person name="Dewar K."/>
            <person name="Lloyd C."/>
            <person name="Itoh T."/>
            <person name="Takeda T."/>
            <person name="Kim D.-W."/>
            <person name="She X."/>
            <person name="Barlow K.F."/>
            <person name="Bloom T."/>
            <person name="Bruford E."/>
            <person name="Chang J.L."/>
            <person name="Cuomo C.A."/>
            <person name="Eichler E."/>
            <person name="FitzGerald M.G."/>
            <person name="Jaffe D.B."/>
            <person name="LaButti K."/>
            <person name="Nicol R."/>
            <person name="Park H.-S."/>
            <person name="Seaman C."/>
            <person name="Sougnez C."/>
            <person name="Yang X."/>
            <person name="Zimmer A.R."/>
            <person name="Zody M.C."/>
            <person name="Birren B.W."/>
            <person name="Nusbaum C."/>
            <person name="Fujiyama A."/>
            <person name="Hattori M."/>
            <person name="Rogers J."/>
            <person name="Lander E.S."/>
            <person name="Sakaki Y."/>
        </authorList>
    </citation>
    <scope>NUCLEOTIDE SEQUENCE [LARGE SCALE GENOMIC DNA]</scope>
</reference>
<reference key="5">
    <citation type="journal article" date="1993" name="Circ. Res.">
        <title>Heteromultimeric assembly of human potassium channels. Molecular basis of a transient outward current?</title>
        <authorList>
            <person name="Po S."/>
            <person name="Roberds S."/>
            <person name="Snyders D.J."/>
            <person name="Tamkun M.M."/>
            <person name="Bennett P.B."/>
        </authorList>
    </citation>
    <scope>FUNCTION</scope>
    <scope>SUBCELLULAR LOCATION</scope>
    <scope>TRANSPORTER ACTIVITY</scope>
</reference>
<reference key="6">
    <citation type="journal article" date="2006" name="Eur. J. Neurosci.">
        <title>Episodic ataxia type 1 mutations in the KCNA1 gene impair the fast inactivation properties of the human potassium channels Kv1.4-1.1/Kvbeta1.1 and Kv1.4-1.1/Kvbeta1.2.</title>
        <authorList>
            <person name="Imbrici P."/>
            <person name="D'Adamo M.C."/>
            <person name="Kullmann D.M."/>
            <person name="Pessia M."/>
        </authorList>
    </citation>
    <scope>FUNCTION</scope>
    <scope>SUBCELLULAR LOCATION</scope>
    <scope>SUBUNIT</scope>
    <scope>TRANSPORTER ACTIVITY</scope>
</reference>
<reference key="7">
    <citation type="journal article" date="2010" name="Biochem. Biophys. Res. Commun.">
        <title>Potassium channel regulator KCNRG regulates surface expression of Shaker-type potassium channels.</title>
        <authorList>
            <person name="Usman H."/>
            <person name="Mathew M.K."/>
        </authorList>
    </citation>
    <scope>INTERACTION WITH KCNRG</scope>
    <scope>SUBCELLULAR LOCATION</scope>
</reference>
<reference key="8">
    <citation type="journal article" date="2016" name="J. Med. Genet.">
        <title>KCNA4 deficiency leads to a syndrome of abnormal striatum, congenital cataract and intellectual disability.</title>
        <authorList>
            <person name="Kaya N."/>
            <person name="Alsagob M."/>
            <person name="D'Adamo M.C."/>
            <person name="Al-Bakheet A."/>
            <person name="Hasan S."/>
            <person name="Muccioli M."/>
            <person name="Almutairi F.B."/>
            <person name="Almass R."/>
            <person name="Aldosary M."/>
            <person name="Monies D."/>
            <person name="Mustafa O.M."/>
            <person name="Alyounes B."/>
            <person name="Kenana R."/>
            <person name="Al-Zahrani J."/>
            <person name="Naim E."/>
            <person name="Binhumaid F.S."/>
            <person name="Qari A."/>
            <person name="Almutairi F."/>
            <person name="Meyer B."/>
            <person name="Plageman T.F."/>
            <person name="Pessia M."/>
            <person name="Colak D."/>
            <person name="Al-Owain M."/>
        </authorList>
    </citation>
    <scope>FUNCTION</scope>
    <scope>TISSUE SPECIFICITY</scope>
    <scope>INVOLVEMENT IN MCIDDS</scope>
    <scope>VARIANT MCIDDS GLN-89</scope>
    <scope>CHARACTERIZATION OF VARIANT MCIDDS GLN-89</scope>
    <scope>TRANSPORTER ACTIVITY</scope>
</reference>
<reference key="9">
    <citation type="journal article" date="1997" name="Nature">
        <title>NMR structure of inactivation gates from mammalian voltage-dependent potassium channels.</title>
        <authorList>
            <person name="Antz C."/>
            <person name="Geyer M."/>
            <person name="Fakler B."/>
            <person name="Schott M.K."/>
            <person name="Guy H.R."/>
            <person name="Frank R."/>
            <person name="Ruppersberg J.P."/>
            <person name="Kalbitzer H.R."/>
        </authorList>
    </citation>
    <scope>STRUCTURE BY NMR OF 1-37</scope>
</reference>
<sequence>MEVAMVSAESSGCNSHMPYGYAAQARARERERLAHSRAAAAAAVAAATAAVEGSGGSGGGSHHHHQSRGACTSHDPQSSRGSRRRRRQRSEKKKAHYRQSSFPHCSDLMPSGSEEKILRELSEEEEDEEEEEEEEEEGRFYYSEDDHGDECSYTDLLPQDEGGGGYSSVRYSDCCERVVINVSGLRFETQMKTLAQFPETLLGDPEKRTQYFDPLRNEYFFDRNRPSFDAILYYYQSGGRLKRPVNVPFDIFTEEVKFYQLGEEALLKFREDEGFVREEEDRALPENEFKKQIWLLFEYPESSSPARGIAIVSVLVILISIVIFCLETLPEFRDDRDLVMALSAGGHGGLLNDTSAPHLENSGHTIFNDPFFIVETVCIVWFSFEFVVRCFACPSQALFFKNIMNIIDIVSILPYFITLGTDLAQQQGGGNGQQQQAMSFAILRIIRLVRVFRIFKLSRHSKGLQILGHTLRASMRELGLLIFFLFIGVILFSSAVYFAEADEPTTHFQSIPDAFWWAVVTMTTVGYGDMKPITVGGKIVGSLCAIAGVLTIALPVPVIVSNFNYFYHRETENEEQTQLTQNAVSCPYLPSNLLKKFRSSTSSSLGDKSEYLEMEEGVKESLCAKEEKCQGKGDDSETDKNNCSNAKAVETDV</sequence>